<evidence type="ECO:0000255" key="1">
    <source>
        <dbReference type="HAMAP-Rule" id="MF_00488"/>
    </source>
</evidence>
<sequence>MTATKQHKKVILVGDGAVGSSYAFALVNQGIAQELGIIEIPALFDKAVGDAEDLSHALAFTSPKKIYAATYADCADADLVVITAGAPQKPGETRLDLVGKNLAINKSIVTQVVESGFNGIFLVAANPVDVLTYSTWKFSGFPKERVIGSGTSLDSARFRQALADKIGVDARSVHAYIMGEHGDSEFAVWSHANVAGVQLEQWLQENRDIDEQGLVDLFISVRDAAYSIINKKGATYYGIAVALARITKAILDDENAVLPLSVYQEGQYGDVKDVFIGQPAIVGAHGIVRPVNIPLNDAELQKMQASAEQLKDIIDEAWKNPEFQEASKN</sequence>
<keyword id="KW-0021">Allosteric enzyme</keyword>
<keyword id="KW-0963">Cytoplasm</keyword>
<keyword id="KW-0520">NAD</keyword>
<keyword id="KW-0560">Oxidoreductase</keyword>
<keyword id="KW-0597">Phosphoprotein</keyword>
<keyword id="KW-1185">Reference proteome</keyword>
<gene>
    <name evidence="1" type="primary">ldh</name>
    <name type="ordered locus">SAG0959</name>
</gene>
<name>LDH_STRA5</name>
<protein>
    <recommendedName>
        <fullName evidence="1">L-lactate dehydrogenase</fullName>
        <shortName evidence="1">L-LDH</shortName>
        <ecNumber evidence="1">1.1.1.27</ecNumber>
    </recommendedName>
</protein>
<dbReference type="EC" id="1.1.1.27" evidence="1"/>
<dbReference type="EMBL" id="AE009948">
    <property type="protein sequence ID" value="AAM99843.1"/>
    <property type="molecule type" value="Genomic_DNA"/>
</dbReference>
<dbReference type="RefSeq" id="NP_687971.1">
    <property type="nucleotide sequence ID" value="NC_004116.1"/>
</dbReference>
<dbReference type="RefSeq" id="WP_000127487.1">
    <property type="nucleotide sequence ID" value="NC_004116.1"/>
</dbReference>
<dbReference type="SMR" id="Q8DZY3"/>
<dbReference type="STRING" id="208435.SAG0959"/>
<dbReference type="KEGG" id="sag:SAG0959"/>
<dbReference type="PATRIC" id="fig|208435.3.peg.965"/>
<dbReference type="HOGENOM" id="CLU_045401_1_1_9"/>
<dbReference type="OrthoDB" id="9802969at2"/>
<dbReference type="UniPathway" id="UPA00554">
    <property type="reaction ID" value="UER00611"/>
</dbReference>
<dbReference type="Proteomes" id="UP000000821">
    <property type="component" value="Chromosome"/>
</dbReference>
<dbReference type="GO" id="GO:0005737">
    <property type="term" value="C:cytoplasm"/>
    <property type="evidence" value="ECO:0007669"/>
    <property type="project" value="UniProtKB-SubCell"/>
</dbReference>
<dbReference type="GO" id="GO:0004459">
    <property type="term" value="F:L-lactate dehydrogenase activity"/>
    <property type="evidence" value="ECO:0007669"/>
    <property type="project" value="UniProtKB-UniRule"/>
</dbReference>
<dbReference type="GO" id="GO:0006096">
    <property type="term" value="P:glycolytic process"/>
    <property type="evidence" value="ECO:0007669"/>
    <property type="project" value="UniProtKB-UniRule"/>
</dbReference>
<dbReference type="GO" id="GO:0006089">
    <property type="term" value="P:lactate metabolic process"/>
    <property type="evidence" value="ECO:0007669"/>
    <property type="project" value="TreeGrafter"/>
</dbReference>
<dbReference type="CDD" id="cd05291">
    <property type="entry name" value="HicDH_like"/>
    <property type="match status" value="1"/>
</dbReference>
<dbReference type="FunFam" id="3.40.50.720:FF:000018">
    <property type="entry name" value="Malate dehydrogenase"/>
    <property type="match status" value="1"/>
</dbReference>
<dbReference type="Gene3D" id="3.90.110.10">
    <property type="entry name" value="Lactate dehydrogenase/glycoside hydrolase, family 4, C-terminal"/>
    <property type="match status" value="1"/>
</dbReference>
<dbReference type="Gene3D" id="3.40.50.720">
    <property type="entry name" value="NAD(P)-binding Rossmann-like Domain"/>
    <property type="match status" value="1"/>
</dbReference>
<dbReference type="HAMAP" id="MF_00488">
    <property type="entry name" value="Lactate_dehydrog"/>
    <property type="match status" value="1"/>
</dbReference>
<dbReference type="InterPro" id="IPR001557">
    <property type="entry name" value="L-lactate/malate_DH"/>
</dbReference>
<dbReference type="InterPro" id="IPR011304">
    <property type="entry name" value="L-lactate_DH"/>
</dbReference>
<dbReference type="InterPro" id="IPR018177">
    <property type="entry name" value="L-lactate_DH_AS"/>
</dbReference>
<dbReference type="InterPro" id="IPR022383">
    <property type="entry name" value="Lactate/malate_DH_C"/>
</dbReference>
<dbReference type="InterPro" id="IPR001236">
    <property type="entry name" value="Lactate/malate_DH_N"/>
</dbReference>
<dbReference type="InterPro" id="IPR015955">
    <property type="entry name" value="Lactate_DH/Glyco_Ohase_4_C"/>
</dbReference>
<dbReference type="InterPro" id="IPR036291">
    <property type="entry name" value="NAD(P)-bd_dom_sf"/>
</dbReference>
<dbReference type="NCBIfam" id="TIGR01771">
    <property type="entry name" value="L-LDH-NAD"/>
    <property type="match status" value="1"/>
</dbReference>
<dbReference type="NCBIfam" id="NF000824">
    <property type="entry name" value="PRK00066.1"/>
    <property type="match status" value="1"/>
</dbReference>
<dbReference type="PANTHER" id="PTHR43128">
    <property type="entry name" value="L-2-HYDROXYCARBOXYLATE DEHYDROGENASE (NAD(P)(+))"/>
    <property type="match status" value="1"/>
</dbReference>
<dbReference type="PANTHER" id="PTHR43128:SF16">
    <property type="entry name" value="L-LACTATE DEHYDROGENASE"/>
    <property type="match status" value="1"/>
</dbReference>
<dbReference type="Pfam" id="PF02866">
    <property type="entry name" value="Ldh_1_C"/>
    <property type="match status" value="1"/>
</dbReference>
<dbReference type="Pfam" id="PF00056">
    <property type="entry name" value="Ldh_1_N"/>
    <property type="match status" value="1"/>
</dbReference>
<dbReference type="PIRSF" id="PIRSF000102">
    <property type="entry name" value="Lac_mal_DH"/>
    <property type="match status" value="1"/>
</dbReference>
<dbReference type="PRINTS" id="PR00086">
    <property type="entry name" value="LLDHDRGNASE"/>
</dbReference>
<dbReference type="SUPFAM" id="SSF56327">
    <property type="entry name" value="LDH C-terminal domain-like"/>
    <property type="match status" value="1"/>
</dbReference>
<dbReference type="SUPFAM" id="SSF51735">
    <property type="entry name" value="NAD(P)-binding Rossmann-fold domains"/>
    <property type="match status" value="1"/>
</dbReference>
<dbReference type="PROSITE" id="PS00064">
    <property type="entry name" value="L_LDH"/>
    <property type="match status" value="1"/>
</dbReference>
<accession>Q8DZY3</accession>
<proteinExistence type="inferred from homology"/>
<organism>
    <name type="scientific">Streptococcus agalactiae serotype V (strain ATCC BAA-611 / 2603 V/R)</name>
    <dbReference type="NCBI Taxonomy" id="208435"/>
    <lineage>
        <taxon>Bacteria</taxon>
        <taxon>Bacillati</taxon>
        <taxon>Bacillota</taxon>
        <taxon>Bacilli</taxon>
        <taxon>Lactobacillales</taxon>
        <taxon>Streptococcaceae</taxon>
        <taxon>Streptococcus</taxon>
    </lineage>
</organism>
<feature type="chain" id="PRO_0000168394" description="L-lactate dehydrogenase">
    <location>
        <begin position="1"/>
        <end position="329"/>
    </location>
</feature>
<feature type="active site" description="Proton acceptor" evidence="1">
    <location>
        <position position="181"/>
    </location>
</feature>
<feature type="binding site" evidence="1">
    <location>
        <position position="18"/>
    </location>
    <ligand>
        <name>NAD(+)</name>
        <dbReference type="ChEBI" id="CHEBI:57540"/>
    </ligand>
</feature>
<feature type="binding site" evidence="1">
    <location>
        <position position="39"/>
    </location>
    <ligand>
        <name>NAD(+)</name>
        <dbReference type="ChEBI" id="CHEBI:57540"/>
    </ligand>
</feature>
<feature type="binding site" evidence="1">
    <location>
        <position position="46"/>
    </location>
    <ligand>
        <name>NAD(+)</name>
        <dbReference type="ChEBI" id="CHEBI:57540"/>
    </ligand>
</feature>
<feature type="binding site" evidence="1">
    <location>
        <position position="71"/>
    </location>
    <ligand>
        <name>NAD(+)</name>
        <dbReference type="ChEBI" id="CHEBI:57540"/>
    </ligand>
</feature>
<feature type="binding site" evidence="1">
    <location>
        <begin position="85"/>
        <end position="86"/>
    </location>
    <ligand>
        <name>NAD(+)</name>
        <dbReference type="ChEBI" id="CHEBI:57540"/>
    </ligand>
</feature>
<feature type="binding site" evidence="1">
    <location>
        <position position="88"/>
    </location>
    <ligand>
        <name>substrate</name>
    </ligand>
</feature>
<feature type="binding site" evidence="1">
    <location>
        <position position="94"/>
    </location>
    <ligand>
        <name>substrate</name>
    </ligand>
</feature>
<feature type="binding site" evidence="1">
    <location>
        <position position="107"/>
    </location>
    <ligand>
        <name>NAD(+)</name>
        <dbReference type="ChEBI" id="CHEBI:57540"/>
    </ligand>
</feature>
<feature type="binding site" evidence="1">
    <location>
        <begin position="124"/>
        <end position="126"/>
    </location>
    <ligand>
        <name>NAD(+)</name>
        <dbReference type="ChEBI" id="CHEBI:57540"/>
    </ligand>
</feature>
<feature type="binding site" evidence="1">
    <location>
        <begin position="126"/>
        <end position="129"/>
    </location>
    <ligand>
        <name>substrate</name>
    </ligand>
</feature>
<feature type="binding site" evidence="1">
    <location>
        <position position="149"/>
    </location>
    <ligand>
        <name>NAD(+)</name>
        <dbReference type="ChEBI" id="CHEBI:57540"/>
    </ligand>
</feature>
<feature type="binding site" evidence="1">
    <location>
        <begin position="154"/>
        <end position="157"/>
    </location>
    <ligand>
        <name>substrate</name>
    </ligand>
</feature>
<feature type="binding site" evidence="1">
    <location>
        <position position="159"/>
    </location>
    <ligand>
        <name>beta-D-fructose 1,6-bisphosphate</name>
        <dbReference type="ChEBI" id="CHEBI:32966"/>
        <note>allosteric activator</note>
    </ligand>
</feature>
<feature type="binding site" evidence="1">
    <location>
        <position position="174"/>
    </location>
    <ligand>
        <name>beta-D-fructose 1,6-bisphosphate</name>
        <dbReference type="ChEBI" id="CHEBI:32966"/>
        <note>allosteric activator</note>
    </ligand>
</feature>
<feature type="binding site" evidence="1">
    <location>
        <position position="235"/>
    </location>
    <ligand>
        <name>substrate</name>
    </ligand>
</feature>
<feature type="modified residue" description="Phosphotyrosine" evidence="1">
    <location>
        <position position="226"/>
    </location>
</feature>
<reference key="1">
    <citation type="journal article" date="2002" name="Proc. Natl. Acad. Sci. U.S.A.">
        <title>Complete genome sequence and comparative genomic analysis of an emerging human pathogen, serotype V Streptococcus agalactiae.</title>
        <authorList>
            <person name="Tettelin H."/>
            <person name="Masignani V."/>
            <person name="Cieslewicz M.J."/>
            <person name="Eisen J.A."/>
            <person name="Peterson S.N."/>
            <person name="Wessels M.R."/>
            <person name="Paulsen I.T."/>
            <person name="Nelson K.E."/>
            <person name="Margarit I."/>
            <person name="Read T.D."/>
            <person name="Madoff L.C."/>
            <person name="Wolf A.M."/>
            <person name="Beanan M.J."/>
            <person name="Brinkac L.M."/>
            <person name="Daugherty S.C."/>
            <person name="DeBoy R.T."/>
            <person name="Durkin A.S."/>
            <person name="Kolonay J.F."/>
            <person name="Madupu R."/>
            <person name="Lewis M.R."/>
            <person name="Radune D."/>
            <person name="Fedorova N.B."/>
            <person name="Scanlan D."/>
            <person name="Khouri H.M."/>
            <person name="Mulligan S."/>
            <person name="Carty H.A."/>
            <person name="Cline R.T."/>
            <person name="Van Aken S.E."/>
            <person name="Gill J."/>
            <person name="Scarselli M."/>
            <person name="Mora M."/>
            <person name="Iacobini E.T."/>
            <person name="Brettoni C."/>
            <person name="Galli G."/>
            <person name="Mariani M."/>
            <person name="Vegni F."/>
            <person name="Maione D."/>
            <person name="Rinaudo D."/>
            <person name="Rappuoli R."/>
            <person name="Telford J.L."/>
            <person name="Kasper D.L."/>
            <person name="Grandi G."/>
            <person name="Fraser C.M."/>
        </authorList>
    </citation>
    <scope>NUCLEOTIDE SEQUENCE [LARGE SCALE GENOMIC DNA]</scope>
    <source>
        <strain>ATCC BAA-611 / 2603 V/R</strain>
    </source>
</reference>
<comment type="function">
    <text evidence="1">Catalyzes the conversion of lactate to pyruvate.</text>
</comment>
<comment type="catalytic activity">
    <reaction evidence="1">
        <text>(S)-lactate + NAD(+) = pyruvate + NADH + H(+)</text>
        <dbReference type="Rhea" id="RHEA:23444"/>
        <dbReference type="ChEBI" id="CHEBI:15361"/>
        <dbReference type="ChEBI" id="CHEBI:15378"/>
        <dbReference type="ChEBI" id="CHEBI:16651"/>
        <dbReference type="ChEBI" id="CHEBI:57540"/>
        <dbReference type="ChEBI" id="CHEBI:57945"/>
        <dbReference type="EC" id="1.1.1.27"/>
    </reaction>
</comment>
<comment type="activity regulation">
    <text evidence="1">Allosterically activated by fructose 1,6-bisphosphate (FBP).</text>
</comment>
<comment type="pathway">
    <text evidence="1">Fermentation; pyruvate fermentation to lactate; (S)-lactate from pyruvate: step 1/1.</text>
</comment>
<comment type="subunit">
    <text evidence="1">Homotetramer.</text>
</comment>
<comment type="subcellular location">
    <subcellularLocation>
        <location evidence="1">Cytoplasm</location>
    </subcellularLocation>
</comment>
<comment type="similarity">
    <text evidence="1">Belongs to the LDH/MDH superfamily. LDH family.</text>
</comment>